<feature type="chain" id="PRO_1000193401" description="DNA repair protein RecO">
    <location>
        <begin position="1"/>
        <end position="249"/>
    </location>
</feature>
<organism>
    <name type="scientific">Mycoplasma mycoides subsp. mycoides SC (strain CCUG 32753 / NCTC 10114 / PG1)</name>
    <dbReference type="NCBI Taxonomy" id="272632"/>
    <lineage>
        <taxon>Bacteria</taxon>
        <taxon>Bacillati</taxon>
        <taxon>Mycoplasmatota</taxon>
        <taxon>Mollicutes</taxon>
        <taxon>Mycoplasmataceae</taxon>
        <taxon>Mycoplasma</taxon>
    </lineage>
</organism>
<comment type="function">
    <text evidence="1">Involved in DNA repair and RecF pathway recombination.</text>
</comment>
<comment type="similarity">
    <text evidence="1">Belongs to the RecO family.</text>
</comment>
<reference key="1">
    <citation type="journal article" date="2004" name="Genome Res.">
        <title>The genome sequence of Mycoplasma mycoides subsp. mycoides SC type strain PG1T, the causative agent of contagious bovine pleuropneumonia (CBPP).</title>
        <authorList>
            <person name="Westberg J."/>
            <person name="Persson A."/>
            <person name="Holmberg A."/>
            <person name="Goesmann A."/>
            <person name="Lundeberg J."/>
            <person name="Johansson K.-E."/>
            <person name="Pettersson B."/>
            <person name="Uhlen M."/>
        </authorList>
    </citation>
    <scope>NUCLEOTIDE SEQUENCE [LARGE SCALE GENOMIC DNA]</scope>
    <source>
        <strain>CCUG 32753 / NCTC 10114 / PG1</strain>
    </source>
</reference>
<sequence>MEKTLKGIVLNSFDFQDYDKIITIYSNLYGKISLVCLGVNKIKSKNKYGINYLSYSNFEIFKSKNKFNLSKLKRSELINSFNHISTDFNLYLYANIITSLVLSLDEQIKNYNLYKTLKLSISIINNKSDFGLKVCVLFMFYFLKIIGNQIDLSKCGFCNSKINPIIAISFTNYCSSCKFCYFDDCILIDNQLSNFINSIFKNDFITNLSQEISTNNLNILTRFILNYYQDIVGTYTTSMYLLSTLIRFN</sequence>
<accession>Q6MTE5</accession>
<dbReference type="EMBL" id="BX293980">
    <property type="protein sequence ID" value="CAE77091.1"/>
    <property type="molecule type" value="Genomic_DNA"/>
</dbReference>
<dbReference type="RefSeq" id="NP_975449.1">
    <property type="nucleotide sequence ID" value="NC_005364.2"/>
</dbReference>
<dbReference type="RefSeq" id="WP_011166647.1">
    <property type="nucleotide sequence ID" value="NC_005364.2"/>
</dbReference>
<dbReference type="SMR" id="Q6MTE5"/>
<dbReference type="STRING" id="272632.MSC_0463"/>
<dbReference type="KEGG" id="mmy:MSC_0463"/>
<dbReference type="PATRIC" id="fig|272632.4.peg.503"/>
<dbReference type="eggNOG" id="COG1381">
    <property type="taxonomic scope" value="Bacteria"/>
</dbReference>
<dbReference type="HOGENOM" id="CLU_066632_5_0_14"/>
<dbReference type="Proteomes" id="UP000001016">
    <property type="component" value="Chromosome"/>
</dbReference>
<dbReference type="GO" id="GO:0043590">
    <property type="term" value="C:bacterial nucleoid"/>
    <property type="evidence" value="ECO:0007669"/>
    <property type="project" value="TreeGrafter"/>
</dbReference>
<dbReference type="GO" id="GO:0006310">
    <property type="term" value="P:DNA recombination"/>
    <property type="evidence" value="ECO:0007669"/>
    <property type="project" value="UniProtKB-UniRule"/>
</dbReference>
<dbReference type="GO" id="GO:0006302">
    <property type="term" value="P:double-strand break repair"/>
    <property type="evidence" value="ECO:0007669"/>
    <property type="project" value="TreeGrafter"/>
</dbReference>
<dbReference type="Gene3D" id="2.40.50.140">
    <property type="entry name" value="Nucleic acid-binding proteins"/>
    <property type="match status" value="1"/>
</dbReference>
<dbReference type="HAMAP" id="MF_00201">
    <property type="entry name" value="RecO"/>
    <property type="match status" value="1"/>
</dbReference>
<dbReference type="InterPro" id="IPR037278">
    <property type="entry name" value="ARFGAP/RecO"/>
</dbReference>
<dbReference type="InterPro" id="IPR022572">
    <property type="entry name" value="DNA_rep/recomb_RecO_N"/>
</dbReference>
<dbReference type="InterPro" id="IPR012340">
    <property type="entry name" value="NA-bd_OB-fold"/>
</dbReference>
<dbReference type="InterPro" id="IPR003717">
    <property type="entry name" value="RecO"/>
</dbReference>
<dbReference type="NCBIfam" id="TIGR00613">
    <property type="entry name" value="reco"/>
    <property type="match status" value="1"/>
</dbReference>
<dbReference type="PANTHER" id="PTHR33991">
    <property type="entry name" value="DNA REPAIR PROTEIN RECO"/>
    <property type="match status" value="1"/>
</dbReference>
<dbReference type="PANTHER" id="PTHR33991:SF1">
    <property type="entry name" value="DNA REPAIR PROTEIN RECO"/>
    <property type="match status" value="1"/>
</dbReference>
<dbReference type="Pfam" id="PF02565">
    <property type="entry name" value="RecO_C"/>
    <property type="match status" value="1"/>
</dbReference>
<dbReference type="Pfam" id="PF11967">
    <property type="entry name" value="RecO_N"/>
    <property type="match status" value="1"/>
</dbReference>
<dbReference type="SUPFAM" id="SSF57863">
    <property type="entry name" value="ArfGap/RecO-like zinc finger"/>
    <property type="match status" value="1"/>
</dbReference>
<dbReference type="SUPFAM" id="SSF50249">
    <property type="entry name" value="Nucleic acid-binding proteins"/>
    <property type="match status" value="1"/>
</dbReference>
<keyword id="KW-0227">DNA damage</keyword>
<keyword id="KW-0233">DNA recombination</keyword>
<keyword id="KW-0234">DNA repair</keyword>
<keyword id="KW-1185">Reference proteome</keyword>
<protein>
    <recommendedName>
        <fullName evidence="1">DNA repair protein RecO</fullName>
    </recommendedName>
    <alternativeName>
        <fullName evidence="1">Recombination protein O</fullName>
    </alternativeName>
</protein>
<gene>
    <name evidence="1" type="primary">recO</name>
    <name type="ordered locus">MSC_0463</name>
</gene>
<name>RECO_MYCMS</name>
<proteinExistence type="inferred from homology"/>
<evidence type="ECO:0000255" key="1">
    <source>
        <dbReference type="HAMAP-Rule" id="MF_00201"/>
    </source>
</evidence>